<name>S61A2_PONAB</name>
<proteinExistence type="evidence at transcript level"/>
<organism>
    <name type="scientific">Pongo abelii</name>
    <name type="common">Sumatran orangutan</name>
    <name type="synonym">Pongo pygmaeus abelii</name>
    <dbReference type="NCBI Taxonomy" id="9601"/>
    <lineage>
        <taxon>Eukaryota</taxon>
        <taxon>Metazoa</taxon>
        <taxon>Chordata</taxon>
        <taxon>Craniata</taxon>
        <taxon>Vertebrata</taxon>
        <taxon>Euteleostomi</taxon>
        <taxon>Mammalia</taxon>
        <taxon>Eutheria</taxon>
        <taxon>Euarchontoglires</taxon>
        <taxon>Primates</taxon>
        <taxon>Haplorrhini</taxon>
        <taxon>Catarrhini</taxon>
        <taxon>Hominidae</taxon>
        <taxon>Pongo</taxon>
    </lineage>
</organism>
<comment type="function">
    <text evidence="2">Component of SEC61 channel-forming translocon complex that mediates transport of signal peptide-containing precursor polypeptides across the endoplasmic reticulum (ER). Forms a ribosome receptor and a gated pore in the ER membrane, both functions required for cotranslational translocation of nascent polypeptides.</text>
</comment>
<comment type="subunit">
    <text evidence="1">The SEC61 channel-forming translocon complex consists of channel-forming core components SEC61A1, SEC61B and SEC61G and different auxiliary components such as SEC62 and SEC63.</text>
</comment>
<comment type="subcellular location">
    <subcellularLocation>
        <location evidence="2">Endoplasmic reticulum membrane</location>
        <topology evidence="3">Multi-pass membrane protein</topology>
    </subcellularLocation>
</comment>
<comment type="similarity">
    <text evidence="4">Belongs to the SecY/SEC61-alpha family.</text>
</comment>
<dbReference type="EMBL" id="CR925994">
    <property type="protein sequence ID" value="CAI29636.1"/>
    <property type="molecule type" value="mRNA"/>
</dbReference>
<dbReference type="RefSeq" id="NP_001127084.1">
    <property type="nucleotide sequence ID" value="NM_001133612.1"/>
</dbReference>
<dbReference type="SMR" id="Q5NVM7"/>
<dbReference type="STRING" id="9601.ENSPPYP00000002424"/>
<dbReference type="GeneID" id="100174115"/>
<dbReference type="KEGG" id="pon:100174115"/>
<dbReference type="CTD" id="55176"/>
<dbReference type="eggNOG" id="KOG1373">
    <property type="taxonomic scope" value="Eukaryota"/>
</dbReference>
<dbReference type="InParanoid" id="Q5NVM7"/>
<dbReference type="OrthoDB" id="420669at2759"/>
<dbReference type="Proteomes" id="UP000001595">
    <property type="component" value="Unplaced"/>
</dbReference>
<dbReference type="GO" id="GO:0005789">
    <property type="term" value="C:endoplasmic reticulum membrane"/>
    <property type="evidence" value="ECO:0007669"/>
    <property type="project" value="UniProtKB-SubCell"/>
</dbReference>
<dbReference type="GO" id="GO:0015031">
    <property type="term" value="P:protein transport"/>
    <property type="evidence" value="ECO:0007669"/>
    <property type="project" value="UniProtKB-KW"/>
</dbReference>
<dbReference type="FunFam" id="1.10.3370.10:FF:000002">
    <property type="entry name" value="Transport Sec61 subunit alpha isoform 2"/>
    <property type="match status" value="1"/>
</dbReference>
<dbReference type="Gene3D" id="1.10.3370.10">
    <property type="entry name" value="SecY subunit domain"/>
    <property type="match status" value="1"/>
</dbReference>
<dbReference type="InterPro" id="IPR002208">
    <property type="entry name" value="SecY/SEC61-alpha"/>
</dbReference>
<dbReference type="InterPro" id="IPR030659">
    <property type="entry name" value="SecY_CS"/>
</dbReference>
<dbReference type="InterPro" id="IPR023201">
    <property type="entry name" value="SecY_dom_sf"/>
</dbReference>
<dbReference type="InterPro" id="IPR019561">
    <property type="entry name" value="Translocon_Sec61/SecY_plug_dom"/>
</dbReference>
<dbReference type="NCBIfam" id="TIGR00967">
    <property type="entry name" value="3a0501s007"/>
    <property type="match status" value="1"/>
</dbReference>
<dbReference type="NCBIfam" id="NF006341">
    <property type="entry name" value="PRK08568.1-5"/>
    <property type="match status" value="1"/>
</dbReference>
<dbReference type="PANTHER" id="PTHR10906">
    <property type="entry name" value="SECY/SEC61-ALPHA FAMILY MEMBER"/>
    <property type="match status" value="1"/>
</dbReference>
<dbReference type="Pfam" id="PF10559">
    <property type="entry name" value="Plug_translocon"/>
    <property type="match status" value="1"/>
</dbReference>
<dbReference type="Pfam" id="PF00344">
    <property type="entry name" value="SecY"/>
    <property type="match status" value="1"/>
</dbReference>
<dbReference type="PIRSF" id="PIRSF004557">
    <property type="entry name" value="SecY"/>
    <property type="match status" value="1"/>
</dbReference>
<dbReference type="SUPFAM" id="SSF103491">
    <property type="entry name" value="Preprotein translocase SecY subunit"/>
    <property type="match status" value="1"/>
</dbReference>
<dbReference type="PROSITE" id="PS00755">
    <property type="entry name" value="SECY_1"/>
    <property type="match status" value="1"/>
</dbReference>
<dbReference type="PROSITE" id="PS00756">
    <property type="entry name" value="SECY_2"/>
    <property type="match status" value="1"/>
</dbReference>
<protein>
    <recommendedName>
        <fullName>Protein transport protein Sec61 subunit alpha isoform 2</fullName>
        <shortName>Sec61 alpha-2</shortName>
    </recommendedName>
</protein>
<accession>Q5NVM7</accession>
<feature type="chain" id="PRO_0000345148" description="Protein transport protein Sec61 subunit alpha isoform 2">
    <location>
        <begin position="1"/>
        <end position="476"/>
    </location>
</feature>
<feature type="topological domain" description="Cytoplasmic" evidence="3">
    <location>
        <begin position="1"/>
        <end position="32"/>
    </location>
</feature>
<feature type="transmembrane region" description="Helical" evidence="3">
    <location>
        <begin position="33"/>
        <end position="53"/>
    </location>
</feature>
<feature type="topological domain" description="Lumenal" evidence="3">
    <location>
        <begin position="54"/>
        <end position="75"/>
    </location>
</feature>
<feature type="transmembrane region" description="Helical" evidence="3">
    <location>
        <begin position="76"/>
        <end position="96"/>
    </location>
</feature>
<feature type="topological domain" description="Cytoplasmic" evidence="3">
    <location>
        <begin position="97"/>
        <end position="117"/>
    </location>
</feature>
<feature type="transmembrane region" description="Helical" evidence="3">
    <location>
        <begin position="118"/>
        <end position="138"/>
    </location>
</feature>
<feature type="topological domain" description="Lumenal" evidence="3">
    <location>
        <begin position="139"/>
        <end position="144"/>
    </location>
</feature>
<feature type="transmembrane region" description="Helical" evidence="3">
    <location>
        <begin position="145"/>
        <end position="165"/>
    </location>
</feature>
<feature type="topological domain" description="Cytoplasmic" evidence="3">
    <location>
        <begin position="166"/>
        <end position="172"/>
    </location>
</feature>
<feature type="transmembrane region" description="Helical" evidence="3">
    <location>
        <begin position="173"/>
        <end position="193"/>
    </location>
</feature>
<feature type="topological domain" description="Lumenal" evidence="3">
    <location>
        <begin position="194"/>
        <end position="240"/>
    </location>
</feature>
<feature type="transmembrane region" description="Helical" evidence="3">
    <location>
        <begin position="241"/>
        <end position="261"/>
    </location>
</feature>
<feature type="topological domain" description="Cytoplasmic" evidence="3">
    <location>
        <begin position="262"/>
        <end position="288"/>
    </location>
</feature>
<feature type="transmembrane region" description="Helical" evidence="3">
    <location>
        <begin position="289"/>
        <end position="309"/>
    </location>
</feature>
<feature type="topological domain" description="Lumenal" evidence="3">
    <location>
        <begin position="310"/>
        <end position="353"/>
    </location>
</feature>
<feature type="transmembrane region" description="Helical" evidence="3">
    <location>
        <begin position="354"/>
        <end position="374"/>
    </location>
</feature>
<feature type="topological domain" description="Cytoplasmic" evidence="3">
    <location>
        <begin position="375"/>
        <end position="420"/>
    </location>
</feature>
<feature type="transmembrane region" description="Helical" evidence="3">
    <location>
        <begin position="421"/>
        <end position="441"/>
    </location>
</feature>
<feature type="transmembrane region" description="Helical" evidence="3">
    <location>
        <begin position="442"/>
        <end position="462"/>
    </location>
</feature>
<feature type="topological domain" description="Cytoplasmic" evidence="3">
    <location>
        <begin position="463"/>
        <end position="476"/>
    </location>
</feature>
<keyword id="KW-0256">Endoplasmic reticulum</keyword>
<keyword id="KW-0472">Membrane</keyword>
<keyword id="KW-0653">Protein transport</keyword>
<keyword id="KW-1185">Reference proteome</keyword>
<keyword id="KW-0811">Translocation</keyword>
<keyword id="KW-0812">Transmembrane</keyword>
<keyword id="KW-1133">Transmembrane helix</keyword>
<keyword id="KW-0813">Transport</keyword>
<reference key="1">
    <citation type="submission" date="2004-11" db="EMBL/GenBank/DDBJ databases">
        <authorList>
            <consortium name="The German cDNA consortium"/>
        </authorList>
    </citation>
    <scope>NUCLEOTIDE SEQUENCE [LARGE SCALE MRNA]</scope>
    <source>
        <tissue>Brain cortex</tissue>
    </source>
</reference>
<evidence type="ECO:0000250" key="1">
    <source>
        <dbReference type="UniProtKB" id="P38377"/>
    </source>
</evidence>
<evidence type="ECO:0000250" key="2">
    <source>
        <dbReference type="UniProtKB" id="P61619"/>
    </source>
</evidence>
<evidence type="ECO:0000255" key="3"/>
<evidence type="ECO:0000305" key="4"/>
<gene>
    <name type="primary">SEC61A2</name>
</gene>
<sequence length="476" mass="52154">MGIKFLEVIKPFCAVLPEIQKPERKIQFREKVLWTAITLFIFLVCCQIPLFGIMSSDSADPFYWMRVILASNRGTLMELGISPIVTSGLIMQLLAGAKIIEVGDTPKDRALFNGAQKLFGMIITIGQAIVYVMTGMYGDPAEMGAGICLLIIIQLFVAGLIVLLLDELLQKGYGLGSGISLFIATNICETIVWKASSPTTINTGRGTEFEGAVIALFHLLATRTDKVRALREAFYRQNLPNLMNLIATVFVFAVVIYFQGFRVDLPIKSARYRGQYSSYPIKLFYTSNIPIILQSALVSNLYVISQMLSVRFSGNFLVNLLGQWADVSGGGPARSYPVGGLCYYLSPPESMGAILEDPVHVVVYIIFMLGSCAFFSKTWIEVSGSSAKDVAKQLKEQQMVMRGHRDTSMVHELNRYIPTAAAFGGLCIGALSVLADFLGAIGSGTGILLAVTIIYQYFEIFVKEQAEVGGMGALFF</sequence>